<keyword id="KW-0496">Mitochondrion</keyword>
<keyword id="KW-0687">Ribonucleoprotein</keyword>
<keyword id="KW-0689">Ribosomal protein</keyword>
<evidence type="ECO:0000305" key="1"/>
<comment type="function">
    <text>Protein S12 is involved in the translation initiation step.</text>
</comment>
<comment type="subcellular location">
    <subcellularLocation>
        <location>Mitochondrion</location>
    </subcellularLocation>
</comment>
<comment type="similarity">
    <text evidence="1">Belongs to the universal ribosomal protein uS12 family.</text>
</comment>
<accession>P48858</accession>
<reference key="1">
    <citation type="journal article" date="1995" name="J. Mol. Biol.">
        <title>Complete sequence of the mitochondrial DNA of the rhodophyte Chondrus crispus (Gigartinales). Gene content and genome organization.</title>
        <authorList>
            <person name="Leblanc C."/>
            <person name="Boyen C."/>
            <person name="Richard O."/>
            <person name="Bonnard G."/>
            <person name="Grienenberger J.-M."/>
            <person name="Kloareg B."/>
        </authorList>
    </citation>
    <scope>NUCLEOTIDE SEQUENCE [GENOMIC DNA]</scope>
    <source>
        <tissue>Apices</tissue>
    </source>
</reference>
<name>RT12_CHOCR</name>
<feature type="chain" id="PRO_0000146436" description="Small ribosomal subunit protein uS12m">
    <location>
        <begin position="1"/>
        <end position="127"/>
    </location>
</feature>
<protein>
    <recommendedName>
        <fullName evidence="1">Small ribosomal subunit protein uS12m</fullName>
    </recommendedName>
    <alternativeName>
        <fullName>Ribosomal protein S12, mitochondrial</fullName>
    </alternativeName>
</protein>
<proteinExistence type="inferred from homology"/>
<geneLocation type="mitochondrion"/>
<sequence length="127" mass="14172">MPTFKQLLKKPRKIVLTKSKSIALIQCPQKKGICMKVYTTSPKKPNSAERKVAKVNLTNGKSIIGYISGEGHTLQEHSLVLVRGGRVKDLPGVQYHFVRGVYDLHAVGTRKKSRSKYGKKLFKAPIV</sequence>
<dbReference type="EMBL" id="Z47547">
    <property type="protein sequence ID" value="CAA87595.1"/>
    <property type="molecule type" value="Genomic_DNA"/>
</dbReference>
<dbReference type="PIR" id="S59079">
    <property type="entry name" value="S59079"/>
</dbReference>
<dbReference type="RefSeq" id="NP_062502.1">
    <property type="nucleotide sequence ID" value="NC_001677.2"/>
</dbReference>
<dbReference type="SMR" id="P48858"/>
<dbReference type="GeneID" id="809374"/>
<dbReference type="KEGG" id="ccp:ChcroMp23"/>
<dbReference type="GO" id="GO:0005739">
    <property type="term" value="C:mitochondrion"/>
    <property type="evidence" value="ECO:0007669"/>
    <property type="project" value="UniProtKB-SubCell"/>
</dbReference>
<dbReference type="GO" id="GO:0015935">
    <property type="term" value="C:small ribosomal subunit"/>
    <property type="evidence" value="ECO:0007669"/>
    <property type="project" value="InterPro"/>
</dbReference>
<dbReference type="GO" id="GO:0003735">
    <property type="term" value="F:structural constituent of ribosome"/>
    <property type="evidence" value="ECO:0007669"/>
    <property type="project" value="InterPro"/>
</dbReference>
<dbReference type="GO" id="GO:0006412">
    <property type="term" value="P:translation"/>
    <property type="evidence" value="ECO:0007669"/>
    <property type="project" value="InterPro"/>
</dbReference>
<dbReference type="CDD" id="cd03368">
    <property type="entry name" value="Ribosomal_S12"/>
    <property type="match status" value="1"/>
</dbReference>
<dbReference type="FunFam" id="2.40.50.140:FF:000099">
    <property type="entry name" value="Ribosomal protein S12, mitochondrial"/>
    <property type="match status" value="1"/>
</dbReference>
<dbReference type="Gene3D" id="2.40.50.140">
    <property type="entry name" value="Nucleic acid-binding proteins"/>
    <property type="match status" value="1"/>
</dbReference>
<dbReference type="InterPro" id="IPR012340">
    <property type="entry name" value="NA-bd_OB-fold"/>
</dbReference>
<dbReference type="InterPro" id="IPR006032">
    <property type="entry name" value="Ribosomal_uS12"/>
</dbReference>
<dbReference type="InterPro" id="IPR005679">
    <property type="entry name" value="Ribosomal_uS12_bac"/>
</dbReference>
<dbReference type="NCBIfam" id="TIGR00981">
    <property type="entry name" value="rpsL_bact"/>
    <property type="match status" value="1"/>
</dbReference>
<dbReference type="PANTHER" id="PTHR11652">
    <property type="entry name" value="30S RIBOSOMAL PROTEIN S12 FAMILY MEMBER"/>
    <property type="match status" value="1"/>
</dbReference>
<dbReference type="Pfam" id="PF00164">
    <property type="entry name" value="Ribosom_S12_S23"/>
    <property type="match status" value="1"/>
</dbReference>
<dbReference type="PIRSF" id="PIRSF002133">
    <property type="entry name" value="Ribosomal_S12/S23"/>
    <property type="match status" value="1"/>
</dbReference>
<dbReference type="PRINTS" id="PR01034">
    <property type="entry name" value="RIBOSOMALS12"/>
</dbReference>
<dbReference type="SUPFAM" id="SSF50249">
    <property type="entry name" value="Nucleic acid-binding proteins"/>
    <property type="match status" value="1"/>
</dbReference>
<dbReference type="PROSITE" id="PS00055">
    <property type="entry name" value="RIBOSOMAL_S12"/>
    <property type="match status" value="1"/>
</dbReference>
<organism>
    <name type="scientific">Chondrus crispus</name>
    <name type="common">Carrageen Irish moss</name>
    <name type="synonym">Polymorpha crispa</name>
    <dbReference type="NCBI Taxonomy" id="2769"/>
    <lineage>
        <taxon>Eukaryota</taxon>
        <taxon>Rhodophyta</taxon>
        <taxon>Florideophyceae</taxon>
        <taxon>Rhodymeniophycidae</taxon>
        <taxon>Gigartinales</taxon>
        <taxon>Gigartinaceae</taxon>
        <taxon>Chondrus</taxon>
    </lineage>
</organism>
<gene>
    <name type="primary">RPS12</name>
</gene>